<keyword id="KW-0010">Activator</keyword>
<keyword id="KW-0963">Cytoplasm</keyword>
<keyword id="KW-0539">Nucleus</keyword>
<keyword id="KW-1267">Proteomics identification</keyword>
<keyword id="KW-1185">Reference proteome</keyword>
<keyword id="KW-0678">Repressor</keyword>
<keyword id="KW-0346">Stress response</keyword>
<keyword id="KW-0804">Transcription</keyword>
<keyword id="KW-0805">Transcription regulation</keyword>
<name>IER5_HUMAN</name>
<gene>
    <name type="primary">IER5</name>
    <name type="ORF">PP4583</name>
    <name type="ORF">SBBI48</name>
</gene>
<feature type="chain" id="PRO_0000190438" description="Immediate early response gene 5 protein">
    <location>
        <begin position="1"/>
        <end position="327"/>
    </location>
</feature>
<feature type="region of interest" description="Disordered" evidence="1">
    <location>
        <begin position="59"/>
        <end position="166"/>
    </location>
</feature>
<feature type="region of interest" description="Disordered" evidence="1">
    <location>
        <begin position="227"/>
        <end position="313"/>
    </location>
</feature>
<feature type="compositionally biased region" description="Low complexity" evidence="1">
    <location>
        <begin position="71"/>
        <end position="84"/>
    </location>
</feature>
<feature type="compositionally biased region" description="Acidic residues" evidence="1">
    <location>
        <begin position="253"/>
        <end position="262"/>
    </location>
</feature>
<feature type="compositionally biased region" description="Polar residues" evidence="1">
    <location>
        <begin position="265"/>
        <end position="278"/>
    </location>
</feature>
<feature type="sequence variant" id="VAR_028404" description="In dbSNP:rs3747955." evidence="4">
    <original>R</original>
    <variation>H</variation>
    <location>
        <position position="92"/>
    </location>
</feature>
<feature type="sequence variant" id="VAR_028405" description="In dbSNP:rs3747954.">
    <original>V</original>
    <variation>I</variation>
    <location>
        <position position="168"/>
    </location>
</feature>
<feature type="sequence variant" id="VAR_028406" description="In dbSNP:rs1416829." evidence="4">
    <original>R</original>
    <variation>G</variation>
    <location>
        <position position="194"/>
    </location>
</feature>
<feature type="sequence variant" id="VAR_028407" description="In dbSNP:rs1361365." evidence="2 3 4 11 12">
    <original>Q</original>
    <variation>R</variation>
    <location>
        <position position="202"/>
    </location>
</feature>
<feature type="sequence variant" id="VAR_028408" description="In dbSNP:rs3747951.">
    <original>P</original>
    <variation>S</variation>
    <location>
        <position position="285"/>
    </location>
</feature>
<feature type="sequence conflict" description="In Ref. 2; CAB91983." evidence="13" ref="2">
    <original>G</original>
    <variation>A</variation>
    <location>
        <position position="161"/>
    </location>
</feature>
<organism>
    <name type="scientific">Homo sapiens</name>
    <name type="common">Human</name>
    <dbReference type="NCBI Taxonomy" id="9606"/>
    <lineage>
        <taxon>Eukaryota</taxon>
        <taxon>Metazoa</taxon>
        <taxon>Chordata</taxon>
        <taxon>Craniata</taxon>
        <taxon>Vertebrata</taxon>
        <taxon>Euteleostomi</taxon>
        <taxon>Mammalia</taxon>
        <taxon>Eutheria</taxon>
        <taxon>Euarchontoglires</taxon>
        <taxon>Primates</taxon>
        <taxon>Haplorrhini</taxon>
        <taxon>Catarrhini</taxon>
        <taxon>Hominidae</taxon>
        <taxon>Homo</taxon>
    </lineage>
</organism>
<reference key="1">
    <citation type="submission" date="1999-08" db="EMBL/GenBank/DDBJ databases">
        <title>Transcript profile of dendritic cells: insights into dendritic cell biology and identification of novel genes.</title>
        <authorList>
            <person name="Zhang W."/>
            <person name="Wan T."/>
            <person name="Yuan Z."/>
            <person name="He L."/>
            <person name="Li N."/>
            <person name="Cao X."/>
        </authorList>
    </citation>
    <scope>NUCLEOTIDE SEQUENCE [MRNA]</scope>
    <scope>VARIANT ARG-202</scope>
    <source>
        <tissue>Dendritic cell</tissue>
    </source>
</reference>
<reference key="2">
    <citation type="submission" date="1999-11" db="EMBL/GenBank/DDBJ databases">
        <title>Isolation and characterisation of a 34 kDa protein associated with the lysosomal/autophagic compartment.</title>
        <authorList>
            <person name="Biederbick A."/>
            <person name="Lenz H.J."/>
            <person name="Elsaesser H.P."/>
        </authorList>
    </citation>
    <scope>NUCLEOTIDE SEQUENCE [MRNA]</scope>
    <scope>VARIANT ARG-202</scope>
</reference>
<reference key="3">
    <citation type="journal article" date="2004" name="Proc. Natl. Acad. Sci. U.S.A.">
        <title>Large-scale cDNA transfection screening for genes related to cancer development and progression.</title>
        <authorList>
            <person name="Wan D."/>
            <person name="Gong Y."/>
            <person name="Qin W."/>
            <person name="Zhang P."/>
            <person name="Li J."/>
            <person name="Wei L."/>
            <person name="Zhou X."/>
            <person name="Li H."/>
            <person name="Qiu X."/>
            <person name="Zhong F."/>
            <person name="He L."/>
            <person name="Yu J."/>
            <person name="Yao G."/>
            <person name="Jiang H."/>
            <person name="Qian L."/>
            <person name="Yu Y."/>
            <person name="Shu H."/>
            <person name="Chen X."/>
            <person name="Xu H."/>
            <person name="Guo M."/>
            <person name="Pan Z."/>
            <person name="Chen Y."/>
            <person name="Ge C."/>
            <person name="Yang S."/>
            <person name="Gu J."/>
        </authorList>
    </citation>
    <scope>NUCLEOTIDE SEQUENCE [LARGE SCALE MRNA]</scope>
    <scope>VARIANTS HIS-92; GLY-194 AND ARG-202</scope>
</reference>
<reference key="4">
    <citation type="journal article" date="2004" name="Nat. Genet.">
        <title>Complete sequencing and characterization of 21,243 full-length human cDNAs.</title>
        <authorList>
            <person name="Ota T."/>
            <person name="Suzuki Y."/>
            <person name="Nishikawa T."/>
            <person name="Otsuki T."/>
            <person name="Sugiyama T."/>
            <person name="Irie R."/>
            <person name="Wakamatsu A."/>
            <person name="Hayashi K."/>
            <person name="Sato H."/>
            <person name="Nagai K."/>
            <person name="Kimura K."/>
            <person name="Makita H."/>
            <person name="Sekine M."/>
            <person name="Obayashi M."/>
            <person name="Nishi T."/>
            <person name="Shibahara T."/>
            <person name="Tanaka T."/>
            <person name="Ishii S."/>
            <person name="Yamamoto J."/>
            <person name="Saito K."/>
            <person name="Kawai Y."/>
            <person name="Isono Y."/>
            <person name="Nakamura Y."/>
            <person name="Nagahari K."/>
            <person name="Murakami K."/>
            <person name="Yasuda T."/>
            <person name="Iwayanagi T."/>
            <person name="Wagatsuma M."/>
            <person name="Shiratori A."/>
            <person name="Sudo H."/>
            <person name="Hosoiri T."/>
            <person name="Kaku Y."/>
            <person name="Kodaira H."/>
            <person name="Kondo H."/>
            <person name="Sugawara M."/>
            <person name="Takahashi M."/>
            <person name="Kanda K."/>
            <person name="Yokoi T."/>
            <person name="Furuya T."/>
            <person name="Kikkawa E."/>
            <person name="Omura Y."/>
            <person name="Abe K."/>
            <person name="Kamihara K."/>
            <person name="Katsuta N."/>
            <person name="Sato K."/>
            <person name="Tanikawa M."/>
            <person name="Yamazaki M."/>
            <person name="Ninomiya K."/>
            <person name="Ishibashi T."/>
            <person name="Yamashita H."/>
            <person name="Murakawa K."/>
            <person name="Fujimori K."/>
            <person name="Tanai H."/>
            <person name="Kimata M."/>
            <person name="Watanabe M."/>
            <person name="Hiraoka S."/>
            <person name="Chiba Y."/>
            <person name="Ishida S."/>
            <person name="Ono Y."/>
            <person name="Takiguchi S."/>
            <person name="Watanabe S."/>
            <person name="Yosida M."/>
            <person name="Hotuta T."/>
            <person name="Kusano J."/>
            <person name="Kanehori K."/>
            <person name="Takahashi-Fujii A."/>
            <person name="Hara H."/>
            <person name="Tanase T.-O."/>
            <person name="Nomura Y."/>
            <person name="Togiya S."/>
            <person name="Komai F."/>
            <person name="Hara R."/>
            <person name="Takeuchi K."/>
            <person name="Arita M."/>
            <person name="Imose N."/>
            <person name="Musashino K."/>
            <person name="Yuuki H."/>
            <person name="Oshima A."/>
            <person name="Sasaki N."/>
            <person name="Aotsuka S."/>
            <person name="Yoshikawa Y."/>
            <person name="Matsunawa H."/>
            <person name="Ichihara T."/>
            <person name="Shiohata N."/>
            <person name="Sano S."/>
            <person name="Moriya S."/>
            <person name="Momiyama H."/>
            <person name="Satoh N."/>
            <person name="Takami S."/>
            <person name="Terashima Y."/>
            <person name="Suzuki O."/>
            <person name="Nakagawa S."/>
            <person name="Senoh A."/>
            <person name="Mizoguchi H."/>
            <person name="Goto Y."/>
            <person name="Shimizu F."/>
            <person name="Wakebe H."/>
            <person name="Hishigaki H."/>
            <person name="Watanabe T."/>
            <person name="Sugiyama A."/>
            <person name="Takemoto M."/>
            <person name="Kawakami B."/>
            <person name="Yamazaki M."/>
            <person name="Watanabe K."/>
            <person name="Kumagai A."/>
            <person name="Itakura S."/>
            <person name="Fukuzumi Y."/>
            <person name="Fujimori Y."/>
            <person name="Komiyama M."/>
            <person name="Tashiro H."/>
            <person name="Tanigami A."/>
            <person name="Fujiwara T."/>
            <person name="Ono T."/>
            <person name="Yamada K."/>
            <person name="Fujii Y."/>
            <person name="Ozaki K."/>
            <person name="Hirao M."/>
            <person name="Ohmori Y."/>
            <person name="Kawabata A."/>
            <person name="Hikiji T."/>
            <person name="Kobatake N."/>
            <person name="Inagaki H."/>
            <person name="Ikema Y."/>
            <person name="Okamoto S."/>
            <person name="Okitani R."/>
            <person name="Kawakami T."/>
            <person name="Noguchi S."/>
            <person name="Itoh T."/>
            <person name="Shigeta K."/>
            <person name="Senba T."/>
            <person name="Matsumura K."/>
            <person name="Nakajima Y."/>
            <person name="Mizuno T."/>
            <person name="Morinaga M."/>
            <person name="Sasaki M."/>
            <person name="Togashi T."/>
            <person name="Oyama M."/>
            <person name="Hata H."/>
            <person name="Watanabe M."/>
            <person name="Komatsu T."/>
            <person name="Mizushima-Sugano J."/>
            <person name="Satoh T."/>
            <person name="Shirai Y."/>
            <person name="Takahashi Y."/>
            <person name="Nakagawa K."/>
            <person name="Okumura K."/>
            <person name="Nagase T."/>
            <person name="Nomura N."/>
            <person name="Kikuchi H."/>
            <person name="Masuho Y."/>
            <person name="Yamashita R."/>
            <person name="Nakai K."/>
            <person name="Yada T."/>
            <person name="Nakamura Y."/>
            <person name="Ohara O."/>
            <person name="Isogai T."/>
            <person name="Sugano S."/>
        </authorList>
    </citation>
    <scope>NUCLEOTIDE SEQUENCE [LARGE SCALE MRNA]</scope>
    <scope>VARIANT ARG-202</scope>
    <source>
        <tissue>Testis</tissue>
    </source>
</reference>
<reference key="5">
    <citation type="journal article" date="2006" name="Nature">
        <title>The DNA sequence and biological annotation of human chromosome 1.</title>
        <authorList>
            <person name="Gregory S.G."/>
            <person name="Barlow K.F."/>
            <person name="McLay K.E."/>
            <person name="Kaul R."/>
            <person name="Swarbreck D."/>
            <person name="Dunham A."/>
            <person name="Scott C.E."/>
            <person name="Howe K.L."/>
            <person name="Woodfine K."/>
            <person name="Spencer C.C.A."/>
            <person name="Jones M.C."/>
            <person name="Gillson C."/>
            <person name="Searle S."/>
            <person name="Zhou Y."/>
            <person name="Kokocinski F."/>
            <person name="McDonald L."/>
            <person name="Evans R."/>
            <person name="Phillips K."/>
            <person name="Atkinson A."/>
            <person name="Cooper R."/>
            <person name="Jones C."/>
            <person name="Hall R.E."/>
            <person name="Andrews T.D."/>
            <person name="Lloyd C."/>
            <person name="Ainscough R."/>
            <person name="Almeida J.P."/>
            <person name="Ambrose K.D."/>
            <person name="Anderson F."/>
            <person name="Andrew R.W."/>
            <person name="Ashwell R.I.S."/>
            <person name="Aubin K."/>
            <person name="Babbage A.K."/>
            <person name="Bagguley C.L."/>
            <person name="Bailey J."/>
            <person name="Beasley H."/>
            <person name="Bethel G."/>
            <person name="Bird C.P."/>
            <person name="Bray-Allen S."/>
            <person name="Brown J.Y."/>
            <person name="Brown A.J."/>
            <person name="Buckley D."/>
            <person name="Burton J."/>
            <person name="Bye J."/>
            <person name="Carder C."/>
            <person name="Chapman J.C."/>
            <person name="Clark S.Y."/>
            <person name="Clarke G."/>
            <person name="Clee C."/>
            <person name="Cobley V."/>
            <person name="Collier R.E."/>
            <person name="Corby N."/>
            <person name="Coville G.J."/>
            <person name="Davies J."/>
            <person name="Deadman R."/>
            <person name="Dunn M."/>
            <person name="Earthrowl M."/>
            <person name="Ellington A.G."/>
            <person name="Errington H."/>
            <person name="Frankish A."/>
            <person name="Frankland J."/>
            <person name="French L."/>
            <person name="Garner P."/>
            <person name="Garnett J."/>
            <person name="Gay L."/>
            <person name="Ghori M.R.J."/>
            <person name="Gibson R."/>
            <person name="Gilby L.M."/>
            <person name="Gillett W."/>
            <person name="Glithero R.J."/>
            <person name="Grafham D.V."/>
            <person name="Griffiths C."/>
            <person name="Griffiths-Jones S."/>
            <person name="Grocock R."/>
            <person name="Hammond S."/>
            <person name="Harrison E.S.I."/>
            <person name="Hart E."/>
            <person name="Haugen E."/>
            <person name="Heath P.D."/>
            <person name="Holmes S."/>
            <person name="Holt K."/>
            <person name="Howden P.J."/>
            <person name="Hunt A.R."/>
            <person name="Hunt S.E."/>
            <person name="Hunter G."/>
            <person name="Isherwood J."/>
            <person name="James R."/>
            <person name="Johnson C."/>
            <person name="Johnson D."/>
            <person name="Joy A."/>
            <person name="Kay M."/>
            <person name="Kershaw J.K."/>
            <person name="Kibukawa M."/>
            <person name="Kimberley A.M."/>
            <person name="King A."/>
            <person name="Knights A.J."/>
            <person name="Lad H."/>
            <person name="Laird G."/>
            <person name="Lawlor S."/>
            <person name="Leongamornlert D.A."/>
            <person name="Lloyd D.M."/>
            <person name="Loveland J."/>
            <person name="Lovell J."/>
            <person name="Lush M.J."/>
            <person name="Lyne R."/>
            <person name="Martin S."/>
            <person name="Mashreghi-Mohammadi M."/>
            <person name="Matthews L."/>
            <person name="Matthews N.S.W."/>
            <person name="McLaren S."/>
            <person name="Milne S."/>
            <person name="Mistry S."/>
            <person name="Moore M.J.F."/>
            <person name="Nickerson T."/>
            <person name="O'Dell C.N."/>
            <person name="Oliver K."/>
            <person name="Palmeiri A."/>
            <person name="Palmer S.A."/>
            <person name="Parker A."/>
            <person name="Patel D."/>
            <person name="Pearce A.V."/>
            <person name="Peck A.I."/>
            <person name="Pelan S."/>
            <person name="Phelps K."/>
            <person name="Phillimore B.J."/>
            <person name="Plumb R."/>
            <person name="Rajan J."/>
            <person name="Raymond C."/>
            <person name="Rouse G."/>
            <person name="Saenphimmachak C."/>
            <person name="Sehra H.K."/>
            <person name="Sheridan E."/>
            <person name="Shownkeen R."/>
            <person name="Sims S."/>
            <person name="Skuce C.D."/>
            <person name="Smith M."/>
            <person name="Steward C."/>
            <person name="Subramanian S."/>
            <person name="Sycamore N."/>
            <person name="Tracey A."/>
            <person name="Tromans A."/>
            <person name="Van Helmond Z."/>
            <person name="Wall M."/>
            <person name="Wallis J.M."/>
            <person name="White S."/>
            <person name="Whitehead S.L."/>
            <person name="Wilkinson J.E."/>
            <person name="Willey D.L."/>
            <person name="Williams H."/>
            <person name="Wilming L."/>
            <person name="Wray P.W."/>
            <person name="Wu Z."/>
            <person name="Coulson A."/>
            <person name="Vaudin M."/>
            <person name="Sulston J.E."/>
            <person name="Durbin R.M."/>
            <person name="Hubbard T."/>
            <person name="Wooster R."/>
            <person name="Dunham I."/>
            <person name="Carter N.P."/>
            <person name="McVean G."/>
            <person name="Ross M.T."/>
            <person name="Harrow J."/>
            <person name="Olson M.V."/>
            <person name="Beck S."/>
            <person name="Rogers J."/>
            <person name="Bentley D.R."/>
        </authorList>
    </citation>
    <scope>NUCLEOTIDE SEQUENCE [LARGE SCALE GENOMIC DNA]</scope>
</reference>
<reference key="6">
    <citation type="journal article" date="2004" name="Genome Res.">
        <title>The status, quality, and expansion of the NIH full-length cDNA project: the Mammalian Gene Collection (MGC).</title>
        <authorList>
            <consortium name="The MGC Project Team"/>
        </authorList>
    </citation>
    <scope>NUCLEOTIDE SEQUENCE [LARGE SCALE MRNA]</scope>
    <scope>VARIANT ARG-202</scope>
    <source>
        <tissue>Cervix</tissue>
    </source>
</reference>
<reference key="7">
    <citation type="journal article" date="2009" name="Radiat. Environ. Biophys.">
        <title>Induced expression of the IER5 gene by gamma-ray irradiation and its involvement in cell cycle checkpoint control and survival.</title>
        <authorList>
            <person name="Ding K.K."/>
            <person name="Shang Z.F."/>
            <person name="Hao C."/>
            <person name="Xu Q.Z."/>
            <person name="Shen J.J."/>
            <person name="Yang C.J."/>
            <person name="Xie Y.H."/>
            <person name="Qiao C."/>
            <person name="Wang Y."/>
            <person name="Xu L.L."/>
            <person name="Zhou P.K."/>
        </authorList>
    </citation>
    <scope>FUNCTION</scope>
    <scope>INDUCTION</scope>
</reference>
<reference key="8">
    <citation type="journal article" date="2011" name="PLoS ONE">
        <title>Transcriptional repression of Cdc25B by IER5 inhibits the proliferation of leukemic progenitor cells through NF-YB and p300 in acute myeloid leukemia.</title>
        <authorList>
            <person name="Nakamura S."/>
            <person name="Nagata Y."/>
            <person name="Tan L."/>
            <person name="Takemura T."/>
            <person name="Shibata K."/>
            <person name="Fujie M."/>
            <person name="Fujisawa S."/>
            <person name="Tanaka Y."/>
            <person name="Toda M."/>
            <person name="Makita R."/>
            <person name="Tsunekawa K."/>
            <person name="Yamada M."/>
            <person name="Yamaoka M."/>
            <person name="Yamashita J."/>
            <person name="Ohnishi K."/>
            <person name="Yamashita M."/>
        </authorList>
    </citation>
    <scope>FUNCTION</scope>
    <scope>CHROMATIN BINDING</scope>
    <scope>TISSUE SPECIFICITY</scope>
</reference>
<reference key="9">
    <citation type="journal article" date="2015" name="FEBS J.">
        <title>Heat-induced expression of the immediate-early gene IER5 and its involvement in the proliferation of heat-shocked cells.</title>
        <authorList>
            <person name="Ishikawa Y."/>
            <person name="Sakurai H."/>
        </authorList>
    </citation>
    <scope>INDUCTION</scope>
</reference>
<reference key="10">
    <citation type="journal article" date="2015" name="FEBS Lett.">
        <title>HSF1 transcriptional activity is modulated by IER5 and PP2A/B55.</title>
        <authorList>
            <person name="Ishikawa Y."/>
            <person name="Kawabata S."/>
            <person name="Sakurai H."/>
        </authorList>
    </citation>
    <scope>FUNCTION</scope>
    <scope>INTERACTION WITH HSF1; PPP2R2A; PPP2R2B; PPP2R2C AND PPP2R2D</scope>
    <scope>ASSOCIATION WITH THE PP2A CATALYTIC SUBUNIT</scope>
    <scope>SUBCELLULAR LOCATION</scope>
</reference>
<reference key="11">
    <citation type="journal article" date="2015" name="FEBS Lett.">
        <title>Immediate-early response 5 (IER5) interacts with protein phosphatase 2A and regulates the phosphorylation of ribosomal protein S6 kinase and heat shock factor 1.</title>
        <authorList>
            <person name="Kawabata S."/>
            <person name="Ishita Y."/>
            <person name="Ishikawa Y."/>
            <person name="Sakurai H."/>
        </authorList>
    </citation>
    <scope>FUNCTION</scope>
    <scope>SUBUNIT</scope>
    <scope>INTERACTION WITH HSF1; PPP2R2B AND RPS6KB1</scope>
    <scope>ASSOCIATION WITH THE PP2A CATALYTIC SUBUNIT</scope>
</reference>
<reference key="12">
    <citation type="journal article" date="2016" name="Sci. Rep.">
        <title>IER5 generates a novel hypo-phosphorylated active form of HSF1 and contributes to tumorigenesis.</title>
        <authorList>
            <person name="Asano Y."/>
            <person name="Kawase T."/>
            <person name="Okabe A."/>
            <person name="Tsutsumi S."/>
            <person name="Ichikawa H."/>
            <person name="Tatebe S."/>
            <person name="Kitabayashi I."/>
            <person name="Tashiro F."/>
            <person name="Namiki H."/>
            <person name="Kondo T."/>
            <person name="Semba K."/>
            <person name="Aburatani H."/>
            <person name="Taya Y."/>
            <person name="Nakagama H."/>
            <person name="Ohki R."/>
        </authorList>
    </citation>
    <scope>INTERACTION WITH HSF1</scope>
</reference>
<dbReference type="EMBL" id="AF178984">
    <property type="protein sequence ID" value="AAF44348.1"/>
    <property type="molecule type" value="mRNA"/>
</dbReference>
<dbReference type="EMBL" id="AJ251089">
    <property type="protein sequence ID" value="CAB91983.1"/>
    <property type="molecule type" value="mRNA"/>
</dbReference>
<dbReference type="EMBL" id="AF258581">
    <property type="protein sequence ID" value="AAG23784.1"/>
    <property type="molecule type" value="mRNA"/>
</dbReference>
<dbReference type="EMBL" id="AK314830">
    <property type="protein sequence ID" value="BAG37350.1"/>
    <property type="molecule type" value="mRNA"/>
</dbReference>
<dbReference type="EMBL" id="AL356267">
    <property type="status" value="NOT_ANNOTATED_CDS"/>
    <property type="molecule type" value="Genomic_DNA"/>
</dbReference>
<dbReference type="EMBL" id="BC000128">
    <property type="protein sequence ID" value="AAH00128.1"/>
    <property type="molecule type" value="mRNA"/>
</dbReference>
<dbReference type="CCDS" id="CCDS1343.1"/>
<dbReference type="RefSeq" id="NP_057629.2">
    <property type="nucleotide sequence ID" value="NM_016545.5"/>
</dbReference>
<dbReference type="SMR" id="Q5VY09"/>
<dbReference type="BioGRID" id="119430">
    <property type="interactions" value="10"/>
</dbReference>
<dbReference type="CORUM" id="Q5VY09"/>
<dbReference type="FunCoup" id="Q5VY09">
    <property type="interactions" value="1387"/>
</dbReference>
<dbReference type="IntAct" id="Q5VY09">
    <property type="interactions" value="10"/>
</dbReference>
<dbReference type="MINT" id="Q5VY09"/>
<dbReference type="STRING" id="9606.ENSP00000356549"/>
<dbReference type="GlyGen" id="Q5VY09">
    <property type="glycosylation" value="1 site"/>
</dbReference>
<dbReference type="iPTMnet" id="Q5VY09"/>
<dbReference type="PhosphoSitePlus" id="Q5VY09"/>
<dbReference type="BioMuta" id="IER5"/>
<dbReference type="DMDM" id="116242521"/>
<dbReference type="MassIVE" id="Q5VY09"/>
<dbReference type="PaxDb" id="9606-ENSP00000356549"/>
<dbReference type="PeptideAtlas" id="Q5VY09"/>
<dbReference type="ProteomicsDB" id="65619"/>
<dbReference type="Antibodypedia" id="34432">
    <property type="antibodies" value="159 antibodies from 21 providers"/>
</dbReference>
<dbReference type="DNASU" id="51278"/>
<dbReference type="Ensembl" id="ENST00000367577.7">
    <property type="protein sequence ID" value="ENSP00000356549.4"/>
    <property type="gene ID" value="ENSG00000162783.11"/>
</dbReference>
<dbReference type="GeneID" id="51278"/>
<dbReference type="KEGG" id="hsa:51278"/>
<dbReference type="MANE-Select" id="ENST00000367577.7">
    <property type="protein sequence ID" value="ENSP00000356549.4"/>
    <property type="RefSeq nucleotide sequence ID" value="NM_016545.5"/>
    <property type="RefSeq protein sequence ID" value="NP_057629.2"/>
</dbReference>
<dbReference type="UCSC" id="uc001got.5">
    <property type="organism name" value="human"/>
</dbReference>
<dbReference type="AGR" id="HGNC:5393"/>
<dbReference type="CTD" id="51278"/>
<dbReference type="DisGeNET" id="51278"/>
<dbReference type="GeneCards" id="IER5"/>
<dbReference type="HGNC" id="HGNC:5393">
    <property type="gene designation" value="IER5"/>
</dbReference>
<dbReference type="HPA" id="ENSG00000162783">
    <property type="expression patterns" value="Tissue enhanced (bone)"/>
</dbReference>
<dbReference type="MIM" id="607177">
    <property type="type" value="gene"/>
</dbReference>
<dbReference type="neXtProt" id="NX_Q5VY09"/>
<dbReference type="OpenTargets" id="ENSG00000162783"/>
<dbReference type="PharmGKB" id="PA29640"/>
<dbReference type="VEuPathDB" id="HostDB:ENSG00000162783"/>
<dbReference type="eggNOG" id="ENOG502S0NB">
    <property type="taxonomic scope" value="Eukaryota"/>
</dbReference>
<dbReference type="GeneTree" id="ENSGT00900000141021"/>
<dbReference type="HOGENOM" id="CLU_057338_0_0_1"/>
<dbReference type="InParanoid" id="Q5VY09"/>
<dbReference type="OMA" id="ICCDESV"/>
<dbReference type="OrthoDB" id="6358394at2759"/>
<dbReference type="PAN-GO" id="Q5VY09">
    <property type="GO annotations" value="0 GO annotations based on evolutionary models"/>
</dbReference>
<dbReference type="PhylomeDB" id="Q5VY09"/>
<dbReference type="TreeFam" id="TF331376"/>
<dbReference type="PathwayCommons" id="Q5VY09"/>
<dbReference type="SignaLink" id="Q5VY09"/>
<dbReference type="BioGRID-ORCS" id="51278">
    <property type="hits" value="20 hits in 1154 CRISPR screens"/>
</dbReference>
<dbReference type="ChiTaRS" id="IER5">
    <property type="organism name" value="human"/>
</dbReference>
<dbReference type="GenomeRNAi" id="51278"/>
<dbReference type="Pharos" id="Q5VY09">
    <property type="development level" value="Tbio"/>
</dbReference>
<dbReference type="PRO" id="PR:Q5VY09"/>
<dbReference type="Proteomes" id="UP000005640">
    <property type="component" value="Chromosome 1"/>
</dbReference>
<dbReference type="RNAct" id="Q5VY09">
    <property type="molecule type" value="protein"/>
</dbReference>
<dbReference type="Bgee" id="ENSG00000162783">
    <property type="expression patterns" value="Expressed in amniotic fluid and 207 other cell types or tissues"/>
</dbReference>
<dbReference type="GO" id="GO:0005737">
    <property type="term" value="C:cytoplasm"/>
    <property type="evidence" value="ECO:0000314"/>
    <property type="project" value="UniProtKB"/>
</dbReference>
<dbReference type="GO" id="GO:0005730">
    <property type="term" value="C:nucleolus"/>
    <property type="evidence" value="ECO:0000314"/>
    <property type="project" value="HPA"/>
</dbReference>
<dbReference type="GO" id="GO:0005654">
    <property type="term" value="C:nucleoplasm"/>
    <property type="evidence" value="ECO:0000314"/>
    <property type="project" value="HPA"/>
</dbReference>
<dbReference type="GO" id="GO:0005634">
    <property type="term" value="C:nucleus"/>
    <property type="evidence" value="ECO:0000314"/>
    <property type="project" value="UniProtKB"/>
</dbReference>
<dbReference type="GO" id="GO:0042802">
    <property type="term" value="F:identical protein binding"/>
    <property type="evidence" value="ECO:0000314"/>
    <property type="project" value="UniProtKB"/>
</dbReference>
<dbReference type="GO" id="GO:0034605">
    <property type="term" value="P:cellular response to heat"/>
    <property type="evidence" value="ECO:0000314"/>
    <property type="project" value="UniProtKB"/>
</dbReference>
<dbReference type="GO" id="GO:1900036">
    <property type="term" value="P:positive regulation of cellular response to heat"/>
    <property type="evidence" value="ECO:0000315"/>
    <property type="project" value="UniProtKB"/>
</dbReference>
<dbReference type="GO" id="GO:0045944">
    <property type="term" value="P:positive regulation of transcription by RNA polymerase II"/>
    <property type="evidence" value="ECO:0000314"/>
    <property type="project" value="UniProtKB"/>
</dbReference>
<dbReference type="GO" id="GO:0042127">
    <property type="term" value="P:regulation of cell population proliferation"/>
    <property type="evidence" value="ECO:0000315"/>
    <property type="project" value="UniProtKB"/>
</dbReference>
<dbReference type="InterPro" id="IPR008653">
    <property type="entry name" value="IER"/>
</dbReference>
<dbReference type="PANTHER" id="PTHR15895">
    <property type="entry name" value="IMMEDIATE EARLY RESPONSE GENE"/>
    <property type="match status" value="1"/>
</dbReference>
<dbReference type="Pfam" id="PF05760">
    <property type="entry name" value="IER"/>
    <property type="match status" value="2"/>
</dbReference>
<accession>Q5VY09</accession>
<accession>B2RBV3</accession>
<accession>Q8WY68</accession>
<accession>Q9NY49</accession>
<accession>Q9NZP9</accession>
<protein>
    <recommendedName>
        <fullName>Immediate early response gene 5 protein</fullName>
    </recommendedName>
</protein>
<comment type="function">
    <text evidence="5 6 7 8 9">Plays a role as a transcription factor (PubMed:22132193, PubMed:25355627). Mediates positive transcriptional regulation of several chaperone genes during the heat shock response in a HSF1-dependent manner (PubMed:25355627, PubMed:25816751). Mediates negative transcriptional regulation of CDC25B expression (PubMed:22132193). Plays a role in the dephosphorylation of the heat shock factor HSF1 and ribosomal protein S6 kinase (S6K) by the protein phosphatase PP2A (PubMed:25816751, PubMed:26496226). Involved in the regulation of cell proliferation and resistance to thermal stress (PubMed:22132193, PubMed:25355627, PubMed:26496226). Involved in the cell cycle checkpoint and survival in response to ionizing radiation (PubMed:19238419, PubMed:22132193). Associates with chromatin to the CDC25B promoter (PubMed:22132193).</text>
</comment>
<comment type="subunit">
    <text evidence="8 9 10">Monomer (PubMed:26496226). Homodimer (PubMed:26496226). Associates with the catalytic subunit of protein phosphatase PP2A (PubMed:25816751, PubMed:26496226). Interacts (via N- and C-terminal regions) with PPP2R2B (PubMed:25816751, PubMed:26496226). Interacts with PPP2R2A, PPP2R2C and PPP2R2D (PubMed:25816751). Interacts (via N-terminus) with RPS6KB1 (PubMed:26496226). Interacts (via central region) with HSF1; this interaction promotes PPP2CA-induced HSF1 dephosphorylation, leading to enhanced HSF1 transcriptional activity (PubMed:25816751, PubMed:26496226, PubMed:26754925).</text>
</comment>
<comment type="interaction">
    <interactant intactId="EBI-1774000">
        <id>Q5VY09</id>
    </interactant>
    <interactant intactId="EBI-719620">
        <id>Q00613</id>
        <label>HSF1</label>
    </interactant>
    <organismsDiffer>false</organismsDiffer>
    <experiments>3</experiments>
</comment>
<comment type="interaction">
    <interactant intactId="EBI-1774000">
        <id>Q5VY09</id>
    </interactant>
    <interactant intactId="EBI-1774000">
        <id>Q5VY09</id>
        <label>IER5</label>
    </interactant>
    <organismsDiffer>false</organismsDiffer>
    <experiments>2</experiments>
</comment>
<comment type="interaction">
    <interactant intactId="EBI-1774000">
        <id>Q5VY09</id>
    </interactant>
    <interactant intactId="EBI-11475194">
        <id>Q8N4C8-4</id>
        <label>MINK1</label>
    </interactant>
    <organismsDiffer>false</organismsDiffer>
    <experiments>2</experiments>
</comment>
<comment type="interaction">
    <interactant intactId="EBI-1774000">
        <id>Q5VY09</id>
    </interactant>
    <interactant intactId="EBI-1775921">
        <id>P23443</id>
        <label>RPS6KB1</label>
    </interactant>
    <organismsDiffer>false</organismsDiffer>
    <experiments>2</experiments>
</comment>
<comment type="subcellular location">
    <subcellularLocation>
        <location evidence="8">Nucleus</location>
    </subcellularLocation>
    <subcellularLocation>
        <location evidence="8">Cytoplasm</location>
    </subcellularLocation>
    <text evidence="8">Predominantly cytoplasmic (PubMed:25816751). Translocated in the nucleus during heat shock (PubMed:25816751).</text>
</comment>
<comment type="tissue specificity">
    <text evidence="6">Expressed in acute myeloid leukemia (AML) cells.</text>
</comment>
<comment type="induction">
    <text evidence="5 7">Up-regulated by heat shock in a heat shock HSF1-dependent manner (PubMed:25355627). Up-regulated by ionizing radiation (PubMed:19238419).</text>
</comment>
<comment type="similarity">
    <text evidence="13">Belongs to the IER family.</text>
</comment>
<sequence length="327" mass="33704">MEFKLEAHRIVSISLGKIYNSRVQRGGIKLHKNLLVSLVLRSARQVYLSDPCPGLYLAGPAGTPAPPPQQQPGEPAAGPPAGWGEPPPPAARASWPETEPQPERSSVSDAPRVGDEVPVATVTGVGDVFQGGEADATEAAWSRVEGPRQAAAREAEGTAGGWGVFPEVSRAARRPCGCPLGGEDPPGTPAATPRAACCCAPQPAEDEPPAPPAVCPRKRCAAGVGGGPAGCPAPGSTPLKKPRRNLEQPPSGGEDDDAEEMETGNVANLISIFGSSFSGLLRKSPGGGREEEEGEESGPEAAEPGQICCDKPVLRDMNPWSTAIVAF</sequence>
<evidence type="ECO:0000256" key="1">
    <source>
        <dbReference type="SAM" id="MobiDB-lite"/>
    </source>
</evidence>
<evidence type="ECO:0000269" key="2">
    <source>
    </source>
</evidence>
<evidence type="ECO:0000269" key="3">
    <source>
    </source>
</evidence>
<evidence type="ECO:0000269" key="4">
    <source>
    </source>
</evidence>
<evidence type="ECO:0000269" key="5">
    <source>
    </source>
</evidence>
<evidence type="ECO:0000269" key="6">
    <source>
    </source>
</evidence>
<evidence type="ECO:0000269" key="7">
    <source>
    </source>
</evidence>
<evidence type="ECO:0000269" key="8">
    <source>
    </source>
</evidence>
<evidence type="ECO:0000269" key="9">
    <source>
    </source>
</evidence>
<evidence type="ECO:0000269" key="10">
    <source>
    </source>
</evidence>
<evidence type="ECO:0000269" key="11">
    <source ref="1"/>
</evidence>
<evidence type="ECO:0000269" key="12">
    <source ref="2"/>
</evidence>
<evidence type="ECO:0000305" key="13"/>
<proteinExistence type="evidence at protein level"/>